<accession>A1ZB86</accession>
<accession>Q7JR76</accession>
<sequence length="609" mass="69676">MNILNPGKFKCIVFDQLRHTWTFLLFICDFLAKIYRTPRITAHQEQLANHNNNNNNNNDLIMEQDMPEEEVGQPEEALPQQDNGEVVDRFNAIQAAVELMDAASDLDEEEEEEDDDVDVDVDYGDTDSESEFEEMYSDEWTSSSDELDEGTELSKSVLNVFLSSDKQQSQMAGQIPMYAFQPLRLVKCQYRDKHIPGGFPLARSGHRIIASNSHLYSLGGYNPRSAMSASRHGRCLLFQELWSYNFATRTWRLELNAGNAANMPVELASNALTIHNNVLISHGGTGYPFGVSCSNDCYVYRTASAGATPGVDRLQVKGDLPTAQYGPGIVIHKHFLYTIGGTTGFDYTCDVYRLDLRTGIWENVYISRPEMRDDPEGRYRHEVVYDGKHIFVLGGGTSHSVYDLQRIPAYNLEANCWDYFETYPDQRAADADDGNRGYPKPRKCFSCVQHQSSTGDIEAFITGGLQGDFSTYFSDIWKLNLRTKHWYRIETAILPRPLYFHSAAHSDNGCMYVFGGIEYIDKEMRRRNDLYKMWMTVPKLSEMCWDAITYYNDNLDLYDRKTLLEAGIPKRFTERLPPQRRRRLDTSQPDPSMLISLYSNPKRARSSTQ</sequence>
<reference key="1">
    <citation type="submission" date="2000-02" db="EMBL/GenBank/DDBJ databases">
        <title>Slim, a kelch repeat molecule expressed at the midline of the Drosophila CNS.</title>
        <authorList>
            <person name="Butland B.M."/>
            <person name="Russell C."/>
            <person name="Tear G."/>
        </authorList>
    </citation>
    <scope>NUCLEOTIDE SEQUENCE [MRNA]</scope>
</reference>
<reference key="2">
    <citation type="journal article" date="2000" name="Science">
        <title>The genome sequence of Drosophila melanogaster.</title>
        <authorList>
            <person name="Adams M.D."/>
            <person name="Celniker S.E."/>
            <person name="Holt R.A."/>
            <person name="Evans C.A."/>
            <person name="Gocayne J.D."/>
            <person name="Amanatides P.G."/>
            <person name="Scherer S.E."/>
            <person name="Li P.W."/>
            <person name="Hoskins R.A."/>
            <person name="Galle R.F."/>
            <person name="George R.A."/>
            <person name="Lewis S.E."/>
            <person name="Richards S."/>
            <person name="Ashburner M."/>
            <person name="Henderson S.N."/>
            <person name="Sutton G.G."/>
            <person name="Wortman J.R."/>
            <person name="Yandell M.D."/>
            <person name="Zhang Q."/>
            <person name="Chen L.X."/>
            <person name="Brandon R.C."/>
            <person name="Rogers Y.-H.C."/>
            <person name="Blazej R.G."/>
            <person name="Champe M."/>
            <person name="Pfeiffer B.D."/>
            <person name="Wan K.H."/>
            <person name="Doyle C."/>
            <person name="Baxter E.G."/>
            <person name="Helt G."/>
            <person name="Nelson C.R."/>
            <person name="Miklos G.L.G."/>
            <person name="Abril J.F."/>
            <person name="Agbayani A."/>
            <person name="An H.-J."/>
            <person name="Andrews-Pfannkoch C."/>
            <person name="Baldwin D."/>
            <person name="Ballew R.M."/>
            <person name="Basu A."/>
            <person name="Baxendale J."/>
            <person name="Bayraktaroglu L."/>
            <person name="Beasley E.M."/>
            <person name="Beeson K.Y."/>
            <person name="Benos P.V."/>
            <person name="Berman B.P."/>
            <person name="Bhandari D."/>
            <person name="Bolshakov S."/>
            <person name="Borkova D."/>
            <person name="Botchan M.R."/>
            <person name="Bouck J."/>
            <person name="Brokstein P."/>
            <person name="Brottier P."/>
            <person name="Burtis K.C."/>
            <person name="Busam D.A."/>
            <person name="Butler H."/>
            <person name="Cadieu E."/>
            <person name="Center A."/>
            <person name="Chandra I."/>
            <person name="Cherry J.M."/>
            <person name="Cawley S."/>
            <person name="Dahlke C."/>
            <person name="Davenport L.B."/>
            <person name="Davies P."/>
            <person name="de Pablos B."/>
            <person name="Delcher A."/>
            <person name="Deng Z."/>
            <person name="Mays A.D."/>
            <person name="Dew I."/>
            <person name="Dietz S.M."/>
            <person name="Dodson K."/>
            <person name="Doup L.E."/>
            <person name="Downes M."/>
            <person name="Dugan-Rocha S."/>
            <person name="Dunkov B.C."/>
            <person name="Dunn P."/>
            <person name="Durbin K.J."/>
            <person name="Evangelista C.C."/>
            <person name="Ferraz C."/>
            <person name="Ferriera S."/>
            <person name="Fleischmann W."/>
            <person name="Fosler C."/>
            <person name="Gabrielian A.E."/>
            <person name="Garg N.S."/>
            <person name="Gelbart W.M."/>
            <person name="Glasser K."/>
            <person name="Glodek A."/>
            <person name="Gong F."/>
            <person name="Gorrell J.H."/>
            <person name="Gu Z."/>
            <person name="Guan P."/>
            <person name="Harris M."/>
            <person name="Harris N.L."/>
            <person name="Harvey D.A."/>
            <person name="Heiman T.J."/>
            <person name="Hernandez J.R."/>
            <person name="Houck J."/>
            <person name="Hostin D."/>
            <person name="Houston K.A."/>
            <person name="Howland T.J."/>
            <person name="Wei M.-H."/>
            <person name="Ibegwam C."/>
            <person name="Jalali M."/>
            <person name="Kalush F."/>
            <person name="Karpen G.H."/>
            <person name="Ke Z."/>
            <person name="Kennison J.A."/>
            <person name="Ketchum K.A."/>
            <person name="Kimmel B.E."/>
            <person name="Kodira C.D."/>
            <person name="Kraft C.L."/>
            <person name="Kravitz S."/>
            <person name="Kulp D."/>
            <person name="Lai Z."/>
            <person name="Lasko P."/>
            <person name="Lei Y."/>
            <person name="Levitsky A.A."/>
            <person name="Li J.H."/>
            <person name="Li Z."/>
            <person name="Liang Y."/>
            <person name="Lin X."/>
            <person name="Liu X."/>
            <person name="Mattei B."/>
            <person name="McIntosh T.C."/>
            <person name="McLeod M.P."/>
            <person name="McPherson D."/>
            <person name="Merkulov G."/>
            <person name="Milshina N.V."/>
            <person name="Mobarry C."/>
            <person name="Morris J."/>
            <person name="Moshrefi A."/>
            <person name="Mount S.M."/>
            <person name="Moy M."/>
            <person name="Murphy B."/>
            <person name="Murphy L."/>
            <person name="Muzny D.M."/>
            <person name="Nelson D.L."/>
            <person name="Nelson D.R."/>
            <person name="Nelson K.A."/>
            <person name="Nixon K."/>
            <person name="Nusskern D.R."/>
            <person name="Pacleb J.M."/>
            <person name="Palazzolo M."/>
            <person name="Pittman G.S."/>
            <person name="Pan S."/>
            <person name="Pollard J."/>
            <person name="Puri V."/>
            <person name="Reese M.G."/>
            <person name="Reinert K."/>
            <person name="Remington K."/>
            <person name="Saunders R.D.C."/>
            <person name="Scheeler F."/>
            <person name="Shen H."/>
            <person name="Shue B.C."/>
            <person name="Siden-Kiamos I."/>
            <person name="Simpson M."/>
            <person name="Skupski M.P."/>
            <person name="Smith T.J."/>
            <person name="Spier E."/>
            <person name="Spradling A.C."/>
            <person name="Stapleton M."/>
            <person name="Strong R."/>
            <person name="Sun E."/>
            <person name="Svirskas R."/>
            <person name="Tector C."/>
            <person name="Turner R."/>
            <person name="Venter E."/>
            <person name="Wang A.H."/>
            <person name="Wang X."/>
            <person name="Wang Z.-Y."/>
            <person name="Wassarman D.A."/>
            <person name="Weinstock G.M."/>
            <person name="Weissenbach J."/>
            <person name="Williams S.M."/>
            <person name="Woodage T."/>
            <person name="Worley K.C."/>
            <person name="Wu D."/>
            <person name="Yang S."/>
            <person name="Yao Q.A."/>
            <person name="Ye J."/>
            <person name="Yeh R.-F."/>
            <person name="Zaveri J.S."/>
            <person name="Zhan M."/>
            <person name="Zhang G."/>
            <person name="Zhao Q."/>
            <person name="Zheng L."/>
            <person name="Zheng X.H."/>
            <person name="Zhong F.N."/>
            <person name="Zhong W."/>
            <person name="Zhou X."/>
            <person name="Zhu S.C."/>
            <person name="Zhu X."/>
            <person name="Smith H.O."/>
            <person name="Gibbs R.A."/>
            <person name="Myers E.W."/>
            <person name="Rubin G.M."/>
            <person name="Venter J.C."/>
        </authorList>
    </citation>
    <scope>NUCLEOTIDE SEQUENCE [LARGE SCALE GENOMIC DNA]</scope>
    <source>
        <strain>Berkeley</strain>
    </source>
</reference>
<reference key="3">
    <citation type="journal article" date="2002" name="Genome Biol.">
        <title>Annotation of the Drosophila melanogaster euchromatic genome: a systematic review.</title>
        <authorList>
            <person name="Misra S."/>
            <person name="Crosby M.A."/>
            <person name="Mungall C.J."/>
            <person name="Matthews B.B."/>
            <person name="Campbell K.S."/>
            <person name="Hradecky P."/>
            <person name="Huang Y."/>
            <person name="Kaminker J.S."/>
            <person name="Millburn G.H."/>
            <person name="Prochnik S.E."/>
            <person name="Smith C.D."/>
            <person name="Tupy J.L."/>
            <person name="Whitfield E.J."/>
            <person name="Bayraktaroglu L."/>
            <person name="Berman B.P."/>
            <person name="Bettencourt B.R."/>
            <person name="Celniker S.E."/>
            <person name="de Grey A.D.N.J."/>
            <person name="Drysdale R.A."/>
            <person name="Harris N.L."/>
            <person name="Richter J."/>
            <person name="Russo S."/>
            <person name="Schroeder A.J."/>
            <person name="Shu S.Q."/>
            <person name="Stapleton M."/>
            <person name="Yamada C."/>
            <person name="Ashburner M."/>
            <person name="Gelbart W.M."/>
            <person name="Rubin G.M."/>
            <person name="Lewis S.E."/>
        </authorList>
    </citation>
    <scope>GENOME REANNOTATION</scope>
    <source>
        <strain>Berkeley</strain>
    </source>
</reference>
<reference key="4">
    <citation type="submission" date="2011-12" db="EMBL/GenBank/DDBJ databases">
        <authorList>
            <person name="Stapleton M."/>
            <person name="Brokstein P."/>
            <person name="Hong L."/>
            <person name="Agbayani A."/>
            <person name="Booth B."/>
            <person name="Carlson J."/>
            <person name="Champe M."/>
            <person name="Chavez C."/>
            <person name="Dorsett V."/>
            <person name="Dresnek D."/>
            <person name="Farfan D."/>
            <person name="Frise E."/>
            <person name="George R."/>
            <person name="Gonzalez M."/>
            <person name="Guarin H."/>
            <person name="Kronmiller B."/>
            <person name="Li P."/>
            <person name="Liao G."/>
            <person name="Miranda A."/>
            <person name="Mungall C.J."/>
            <person name="Nunoo J."/>
            <person name="Pacleb J."/>
            <person name="Paragas V."/>
            <person name="Park S."/>
            <person name="Patel S."/>
            <person name="Phouanenavong S."/>
            <person name="Wan K."/>
            <person name="Yu C."/>
            <person name="Lewis S.E."/>
            <person name="Rubin G.M."/>
            <person name="Celniker S.E."/>
        </authorList>
    </citation>
    <scope>NUCLEOTIDE SEQUENCE [LARGE SCALE MRNA]</scope>
    <source>
        <strain>Berkeley</strain>
        <tissue>Embryo</tissue>
        <tissue>Testis</tissue>
    </source>
</reference>
<reference key="5">
    <citation type="journal article" date="2012" name="Mol. Cell">
        <title>The Kelch repeat protein KLHDC10 regulates oxidative stress-induced ASK1 activation by suppressing PP5.</title>
        <authorList>
            <person name="Sekine Y."/>
            <person name="Hatanaka R."/>
            <person name="Watanabe T."/>
            <person name="Sono N."/>
            <person name="Iemura S."/>
            <person name="Natsume T."/>
            <person name="Kuranaga E."/>
            <person name="Miura M."/>
            <person name="Takeda K."/>
            <person name="Ichijo H."/>
        </authorList>
    </citation>
    <scope>FUNCTION</scope>
    <scope>INTERACTION WITH ELONGIN-C</scope>
</reference>
<name>KLD10_DROME</name>
<feature type="chain" id="PRO_0000424032" description="Kelch domain-containing protein 10 homolog">
    <location>
        <begin position="1"/>
        <end position="609"/>
    </location>
</feature>
<feature type="repeat" description="Kelch 1">
    <location>
        <begin position="214"/>
        <end position="277"/>
    </location>
</feature>
<feature type="repeat" description="Kelch 2">
    <location>
        <begin position="279"/>
        <end position="334"/>
    </location>
</feature>
<feature type="repeat" description="Kelch 3">
    <location>
        <begin position="335"/>
        <end position="381"/>
    </location>
</feature>
<feature type="repeat" description="Kelch 4">
    <location>
        <begin position="389"/>
        <end position="437"/>
    </location>
</feature>
<feature type="repeat" description="Kelch 5">
    <location>
        <begin position="458"/>
        <end position="508"/>
    </location>
</feature>
<feature type="repeat" description="Kelch 6">
    <location>
        <begin position="510"/>
        <end position="554"/>
    </location>
</feature>
<feature type="region of interest" description="Disordered" evidence="1">
    <location>
        <begin position="103"/>
        <end position="146"/>
    </location>
</feature>
<feature type="region of interest" description="Disordered" evidence="1">
    <location>
        <begin position="576"/>
        <end position="609"/>
    </location>
</feature>
<feature type="compositionally biased region" description="Acidic residues" evidence="1">
    <location>
        <begin position="104"/>
        <end position="137"/>
    </location>
</feature>
<dbReference type="EMBL" id="AF239722">
    <property type="protein sequence ID" value="AAK82959.1"/>
    <property type="molecule type" value="mRNA"/>
</dbReference>
<dbReference type="EMBL" id="AE013599">
    <property type="protein sequence ID" value="AAF57686.1"/>
    <property type="molecule type" value="Genomic_DNA"/>
</dbReference>
<dbReference type="EMBL" id="AE013599">
    <property type="protein sequence ID" value="AAM68458.3"/>
    <property type="molecule type" value="Genomic_DNA"/>
</dbReference>
<dbReference type="EMBL" id="BT132916">
    <property type="protein sequence ID" value="AEW12888.1"/>
    <property type="status" value="ALT_INIT"/>
    <property type="molecule type" value="mRNA"/>
</dbReference>
<dbReference type="EMBL" id="BT003216">
    <property type="protein sequence ID" value="AAO24971.1"/>
    <property type="molecule type" value="mRNA"/>
</dbReference>
<dbReference type="EMBL" id="BT125963">
    <property type="protein sequence ID" value="ADX35942.1"/>
    <property type="molecule type" value="mRNA"/>
</dbReference>
<dbReference type="RefSeq" id="NP_523782.1">
    <property type="nucleotide sequence ID" value="NM_079058.3"/>
</dbReference>
<dbReference type="RefSeq" id="NP_725794.2">
    <property type="nucleotide sequence ID" value="NM_166289.2"/>
</dbReference>
<dbReference type="SMR" id="A1ZB86"/>
<dbReference type="BioGRID" id="62797">
    <property type="interactions" value="9"/>
</dbReference>
<dbReference type="FunCoup" id="A1ZB86">
    <property type="interactions" value="976"/>
</dbReference>
<dbReference type="IntAct" id="A1ZB86">
    <property type="interactions" value="1"/>
</dbReference>
<dbReference type="STRING" id="7227.FBpp0085872"/>
<dbReference type="GlyGen" id="A1ZB86">
    <property type="glycosylation" value="1 site"/>
</dbReference>
<dbReference type="PaxDb" id="7227-FBpp0085872"/>
<dbReference type="DNASU" id="37121"/>
<dbReference type="EnsemblMetazoa" id="FBtr0086693">
    <property type="protein sequence ID" value="FBpp0085872"/>
    <property type="gene ID" value="FBgn0261477"/>
</dbReference>
<dbReference type="EnsemblMetazoa" id="FBtr0331958">
    <property type="protein sequence ID" value="FBpp0304290"/>
    <property type="gene ID" value="FBgn0261477"/>
</dbReference>
<dbReference type="GeneID" id="37121"/>
<dbReference type="KEGG" id="dme:Dmel_CG5186"/>
<dbReference type="UCSC" id="CG5186-RA">
    <property type="organism name" value="d. melanogaster"/>
</dbReference>
<dbReference type="UCSC" id="CG5186-RB">
    <property type="organism name" value="d. melanogaster"/>
</dbReference>
<dbReference type="AGR" id="FB:FBgn0261477"/>
<dbReference type="CTD" id="37121"/>
<dbReference type="FlyBase" id="FBgn0261477">
    <property type="gene designation" value="slim"/>
</dbReference>
<dbReference type="VEuPathDB" id="VectorBase:FBgn0261477"/>
<dbReference type="eggNOG" id="KOG0379">
    <property type="taxonomic scope" value="Eukaryota"/>
</dbReference>
<dbReference type="GeneTree" id="ENSGT00390000003374"/>
<dbReference type="HOGENOM" id="CLU_030914_0_0_1"/>
<dbReference type="InParanoid" id="A1ZB86"/>
<dbReference type="OMA" id="IHKHYLY"/>
<dbReference type="OrthoDB" id="7676067at2759"/>
<dbReference type="PhylomeDB" id="A1ZB86"/>
<dbReference type="BioGRID-ORCS" id="37121">
    <property type="hits" value="0 hits in 1 CRISPR screen"/>
</dbReference>
<dbReference type="GenomeRNAi" id="37121"/>
<dbReference type="PRO" id="PR:A1ZB86"/>
<dbReference type="Proteomes" id="UP000000803">
    <property type="component" value="Chromosome 2R"/>
</dbReference>
<dbReference type="Bgee" id="FBgn0261477">
    <property type="expression patterns" value="Expressed in hemocyte (sensu Nematoda and Protostomia) in insect leg and 246 other cell types or tissues"/>
</dbReference>
<dbReference type="ExpressionAtlas" id="A1ZB86">
    <property type="expression patterns" value="baseline and differential"/>
</dbReference>
<dbReference type="GO" id="GO:0031462">
    <property type="term" value="C:Cul2-RING ubiquitin ligase complex"/>
    <property type="evidence" value="ECO:0000314"/>
    <property type="project" value="FlyBase"/>
</dbReference>
<dbReference type="GO" id="GO:0032874">
    <property type="term" value="P:positive regulation of stress-activated MAPK cascade"/>
    <property type="evidence" value="ECO:0000314"/>
    <property type="project" value="FlyBase"/>
</dbReference>
<dbReference type="FunFam" id="2.120.10.80:FF:000156">
    <property type="entry name" value="Kelch domain-containing protein 10 homolog"/>
    <property type="match status" value="1"/>
</dbReference>
<dbReference type="FunFam" id="2.120.10.80:FF:000162">
    <property type="entry name" value="Kelch domain-containing protein 10 homolog"/>
    <property type="match status" value="1"/>
</dbReference>
<dbReference type="Gene3D" id="2.120.10.80">
    <property type="entry name" value="Kelch-type beta propeller"/>
    <property type="match status" value="2"/>
</dbReference>
<dbReference type="InterPro" id="IPR015915">
    <property type="entry name" value="Kelch-typ_b-propeller"/>
</dbReference>
<dbReference type="InterPro" id="IPR052125">
    <property type="entry name" value="KLHDC10"/>
</dbReference>
<dbReference type="PANTHER" id="PTHR46428">
    <property type="entry name" value="KELCH DOMAIN-CONTAINING PROTEIN 10"/>
    <property type="match status" value="1"/>
</dbReference>
<dbReference type="PANTHER" id="PTHR46428:SF1">
    <property type="entry name" value="KELCH DOMAIN-CONTAINING PROTEIN 10"/>
    <property type="match status" value="1"/>
</dbReference>
<dbReference type="Pfam" id="PF13418">
    <property type="entry name" value="Kelch_4"/>
    <property type="match status" value="1"/>
</dbReference>
<dbReference type="Pfam" id="PF24681">
    <property type="entry name" value="Kelch_KLHDC2_KLHL20_DRC7"/>
    <property type="match status" value="1"/>
</dbReference>
<dbReference type="SUPFAM" id="SSF117281">
    <property type="entry name" value="Kelch motif"/>
    <property type="match status" value="2"/>
</dbReference>
<gene>
    <name type="primary">slim</name>
    <name type="ORF">CG5186</name>
</gene>
<keyword id="KW-0880">Kelch repeat</keyword>
<keyword id="KW-1185">Reference proteome</keyword>
<keyword id="KW-0677">Repeat</keyword>
<protein>
    <recommendedName>
        <fullName>Kelch domain-containing protein 10 homolog</fullName>
    </recommendedName>
    <alternativeName>
        <fullName>Scruin like at the midline</fullName>
    </alternativeName>
</protein>
<evidence type="ECO:0000256" key="1">
    <source>
        <dbReference type="SAM" id="MobiDB-lite"/>
    </source>
</evidence>
<evidence type="ECO:0000269" key="2">
    <source>
    </source>
</evidence>
<evidence type="ECO:0000305" key="3"/>
<organism>
    <name type="scientific">Drosophila melanogaster</name>
    <name type="common">Fruit fly</name>
    <dbReference type="NCBI Taxonomy" id="7227"/>
    <lineage>
        <taxon>Eukaryota</taxon>
        <taxon>Metazoa</taxon>
        <taxon>Ecdysozoa</taxon>
        <taxon>Arthropoda</taxon>
        <taxon>Hexapoda</taxon>
        <taxon>Insecta</taxon>
        <taxon>Pterygota</taxon>
        <taxon>Neoptera</taxon>
        <taxon>Endopterygota</taxon>
        <taxon>Diptera</taxon>
        <taxon>Brachycera</taxon>
        <taxon>Muscomorpha</taxon>
        <taxon>Ephydroidea</taxon>
        <taxon>Drosophilidae</taxon>
        <taxon>Drosophila</taxon>
        <taxon>Sophophora</taxon>
    </lineage>
</organism>
<proteinExistence type="evidence at protein level"/>
<comment type="function">
    <text evidence="2">Activates the Pk92B/DASK1-MAPK signaling cascade.</text>
</comment>
<comment type="subunit">
    <text evidence="2">Interacts with Elongin-C; may be the substrate recognition component of an E3 ubiquitin ligase complex.</text>
</comment>
<comment type="sequence caution" evidence="3">
    <conflict type="erroneous initiation">
        <sequence resource="EMBL-CDS" id="AEW12888"/>
    </conflict>
    <text>Extended N-terminus.</text>
</comment>